<sequence length="92" mass="10275">MAKRTKKVGIVGKYGTRYGASLRKMVKKIEISQHAKYTCSFCGKTKMKRRAVGIWHCGSCMKTVAGGAWTYNTTSAVTVKSAIRRLKELKDQ</sequence>
<protein>
    <recommendedName>
        <fullName evidence="4">Large ribosomal subunit protein eL43</fullName>
    </recommendedName>
    <alternativeName>
        <fullName>60S ribosomal protein L37a</fullName>
    </alternativeName>
</protein>
<organism>
    <name type="scientific">Pongo abelii</name>
    <name type="common">Sumatran orangutan</name>
    <name type="synonym">Pongo pygmaeus abelii</name>
    <dbReference type="NCBI Taxonomy" id="9601"/>
    <lineage>
        <taxon>Eukaryota</taxon>
        <taxon>Metazoa</taxon>
        <taxon>Chordata</taxon>
        <taxon>Craniata</taxon>
        <taxon>Vertebrata</taxon>
        <taxon>Euteleostomi</taxon>
        <taxon>Mammalia</taxon>
        <taxon>Eutheria</taxon>
        <taxon>Euarchontoglires</taxon>
        <taxon>Primates</taxon>
        <taxon>Haplorrhini</taxon>
        <taxon>Catarrhini</taxon>
        <taxon>Hominidae</taxon>
        <taxon>Pongo</taxon>
    </lineage>
</organism>
<accession>Q5RBF9</accession>
<comment type="function">
    <text evidence="2">Component of the large ribosomal subunit. The ribosome is a large ribonucleoprotein complex responsible for the synthesis of proteins in the cell.</text>
</comment>
<comment type="subunit">
    <text evidence="2">Component of the large ribosomal subunit.</text>
</comment>
<comment type="subcellular location">
    <subcellularLocation>
        <location evidence="2">Cytoplasm</location>
    </subcellularLocation>
</comment>
<comment type="similarity">
    <text evidence="4">Belongs to the eukaryotic ribosomal protein eL43 family.</text>
</comment>
<keyword id="KW-0963">Cytoplasm</keyword>
<keyword id="KW-0479">Metal-binding</keyword>
<keyword id="KW-1185">Reference proteome</keyword>
<keyword id="KW-0687">Ribonucleoprotein</keyword>
<keyword id="KW-0689">Ribosomal protein</keyword>
<keyword id="KW-0862">Zinc</keyword>
<keyword id="KW-0863">Zinc-finger</keyword>
<proteinExistence type="inferred from homology"/>
<evidence type="ECO:0000250" key="1">
    <source>
        <dbReference type="UniProtKB" id="P49166"/>
    </source>
</evidence>
<evidence type="ECO:0000250" key="2">
    <source>
        <dbReference type="UniProtKB" id="P61513"/>
    </source>
</evidence>
<evidence type="ECO:0000255" key="3"/>
<evidence type="ECO:0000305" key="4"/>
<gene>
    <name type="primary">RPL37A</name>
</gene>
<dbReference type="EMBL" id="CR858690">
    <property type="protein sequence ID" value="CAH90901.1"/>
    <property type="molecule type" value="mRNA"/>
</dbReference>
<dbReference type="RefSeq" id="NP_001125513.1">
    <property type="nucleotide sequence ID" value="NM_001132041.2"/>
</dbReference>
<dbReference type="SMR" id="Q5RBF9"/>
<dbReference type="FunCoup" id="Q5RBF9">
    <property type="interactions" value="1711"/>
</dbReference>
<dbReference type="STRING" id="9601.ENSPPYP00000021078"/>
<dbReference type="Ensembl" id="ENSPPYT00000021921.2">
    <property type="protein sequence ID" value="ENSPPYP00000021078.1"/>
    <property type="gene ID" value="ENSPPYG00000018792.2"/>
</dbReference>
<dbReference type="GeneID" id="100172423"/>
<dbReference type="KEGG" id="pon:100172423"/>
<dbReference type="KEGG" id="pon:100458923"/>
<dbReference type="CTD" id="6168"/>
<dbReference type="eggNOG" id="KOG0402">
    <property type="taxonomic scope" value="Eukaryota"/>
</dbReference>
<dbReference type="GeneTree" id="ENSGT00390000016988"/>
<dbReference type="HOGENOM" id="CLU_141199_1_0_1"/>
<dbReference type="InParanoid" id="Q5RBF9"/>
<dbReference type="OrthoDB" id="10258345at2759"/>
<dbReference type="TreeFam" id="TF313068"/>
<dbReference type="Proteomes" id="UP000001595">
    <property type="component" value="Chromosome 8"/>
</dbReference>
<dbReference type="GO" id="GO:0022625">
    <property type="term" value="C:cytosolic large ribosomal subunit"/>
    <property type="evidence" value="ECO:0007669"/>
    <property type="project" value="UniProtKB-ARBA"/>
</dbReference>
<dbReference type="GO" id="GO:0070180">
    <property type="term" value="F:large ribosomal subunit rRNA binding"/>
    <property type="evidence" value="ECO:0007669"/>
    <property type="project" value="TreeGrafter"/>
</dbReference>
<dbReference type="GO" id="GO:0003735">
    <property type="term" value="F:structural constituent of ribosome"/>
    <property type="evidence" value="ECO:0007669"/>
    <property type="project" value="InterPro"/>
</dbReference>
<dbReference type="GO" id="GO:0008270">
    <property type="term" value="F:zinc ion binding"/>
    <property type="evidence" value="ECO:0007669"/>
    <property type="project" value="UniProtKB-KW"/>
</dbReference>
<dbReference type="GO" id="GO:0006412">
    <property type="term" value="P:translation"/>
    <property type="evidence" value="ECO:0007669"/>
    <property type="project" value="InterPro"/>
</dbReference>
<dbReference type="FunFam" id="2.20.25.30:FF:000002">
    <property type="entry name" value="60S ribosomal protein L37a"/>
    <property type="match status" value="1"/>
</dbReference>
<dbReference type="Gene3D" id="2.20.25.30">
    <property type="match status" value="1"/>
</dbReference>
<dbReference type="HAMAP" id="MF_00327">
    <property type="entry name" value="Ribosomal_eL43"/>
    <property type="match status" value="1"/>
</dbReference>
<dbReference type="InterPro" id="IPR011331">
    <property type="entry name" value="Ribosomal_eL37/eL43"/>
</dbReference>
<dbReference type="InterPro" id="IPR002674">
    <property type="entry name" value="Ribosomal_eL43"/>
</dbReference>
<dbReference type="InterPro" id="IPR011332">
    <property type="entry name" value="Ribosomal_zn-bd"/>
</dbReference>
<dbReference type="NCBIfam" id="TIGR00280">
    <property type="entry name" value="eL43_euk_arch"/>
    <property type="match status" value="1"/>
</dbReference>
<dbReference type="NCBIfam" id="NF003058">
    <property type="entry name" value="PRK03976.1"/>
    <property type="match status" value="1"/>
</dbReference>
<dbReference type="PANTHER" id="PTHR48188:SF2">
    <property type="entry name" value="60S RIBOSOMAL PROTEIN L37A"/>
    <property type="match status" value="1"/>
</dbReference>
<dbReference type="PANTHER" id="PTHR48188">
    <property type="entry name" value="60S RIBOSOMAL PROTEIN L43"/>
    <property type="match status" value="1"/>
</dbReference>
<dbReference type="Pfam" id="PF01780">
    <property type="entry name" value="Ribosomal_L37ae"/>
    <property type="match status" value="1"/>
</dbReference>
<dbReference type="SUPFAM" id="SSF57829">
    <property type="entry name" value="Zn-binding ribosomal proteins"/>
    <property type="match status" value="1"/>
</dbReference>
<reference key="1">
    <citation type="submission" date="2004-11" db="EMBL/GenBank/DDBJ databases">
        <authorList>
            <consortium name="The German cDNA consortium"/>
        </authorList>
    </citation>
    <scope>NUCLEOTIDE SEQUENCE [LARGE SCALE MRNA]</scope>
    <source>
        <tissue>Heart</tissue>
    </source>
</reference>
<name>RL37A_PONAB</name>
<feature type="chain" id="PRO_0000265735" description="Large ribosomal subunit protein eL43">
    <location>
        <begin position="1"/>
        <end position="92"/>
    </location>
</feature>
<feature type="zinc finger region" description="C4-type" evidence="3">
    <location>
        <begin position="39"/>
        <end position="60"/>
    </location>
</feature>
<feature type="binding site" evidence="1">
    <location>
        <position position="39"/>
    </location>
    <ligand>
        <name>Zn(2+)</name>
        <dbReference type="ChEBI" id="CHEBI:29105"/>
    </ligand>
</feature>
<feature type="binding site" evidence="1">
    <location>
        <position position="42"/>
    </location>
    <ligand>
        <name>Zn(2+)</name>
        <dbReference type="ChEBI" id="CHEBI:29105"/>
    </ligand>
</feature>
<feature type="binding site" evidence="1">
    <location>
        <position position="57"/>
    </location>
    <ligand>
        <name>Zn(2+)</name>
        <dbReference type="ChEBI" id="CHEBI:29105"/>
    </ligand>
</feature>
<feature type="binding site" evidence="1">
    <location>
        <position position="60"/>
    </location>
    <ligand>
        <name>Zn(2+)</name>
        <dbReference type="ChEBI" id="CHEBI:29105"/>
    </ligand>
</feature>